<sequence length="298" mass="34595">MSVLNVLESHVILHIIEFLPDHEKIKFMSTCKSLYEFRCHVTYNNFYVYDTINHLDFVNKFKKLIYLSIFNENSKNYDPTIIVKSIKDVIPPNTKCIIFDDDFDEDITEFIPEGIKYVVFGIHFNKPIKKILPNSIIHLILGFSFNQSISDILPCGLIELTLGHNFRQSINDIPNTITKLIFDSEFIPEIHGKIPTNINCLGIRGYFGKNHKKDIPNNIKHLIIGTDYHSKMCEVIEDSIDMIITENMTHITLGWNFDDTTFNIPNGVTHLILYQKFNPTIIKCLPSSVEHVEFISRW</sequence>
<accession>Q5UPW1</accession>
<name>YR286_MIMIV</name>
<protein>
    <recommendedName>
        <fullName>Putative F-box and FNIP repeat-containing protein R286</fullName>
    </recommendedName>
</protein>
<organismHost>
    <name type="scientific">Acanthamoeba polyphaga</name>
    <name type="common">Amoeba</name>
    <dbReference type="NCBI Taxonomy" id="5757"/>
</organismHost>
<gene>
    <name type="ordered locus">MIMI_R286</name>
</gene>
<dbReference type="EMBL" id="AY653733">
    <property type="protein sequence ID" value="AAV50558.1"/>
    <property type="molecule type" value="Genomic_DNA"/>
</dbReference>
<dbReference type="SMR" id="Q5UPW1"/>
<dbReference type="KEGG" id="vg:9924901"/>
<dbReference type="Proteomes" id="UP000001134">
    <property type="component" value="Genome"/>
</dbReference>
<dbReference type="CDD" id="cd09917">
    <property type="entry name" value="F-box_SF"/>
    <property type="match status" value="1"/>
</dbReference>
<dbReference type="InterPro" id="IPR008615">
    <property type="entry name" value="FNIP"/>
</dbReference>
<dbReference type="InterPro" id="IPR051251">
    <property type="entry name" value="STK_FNIP-Repeat"/>
</dbReference>
<dbReference type="PANTHER" id="PTHR32134">
    <property type="entry name" value="FNIP REPEAT-CONTAINING PROTEIN"/>
    <property type="match status" value="1"/>
</dbReference>
<dbReference type="PANTHER" id="PTHR32134:SF92">
    <property type="entry name" value="FNIP REPEAT-CONTAINING PROTEIN"/>
    <property type="match status" value="1"/>
</dbReference>
<dbReference type="Pfam" id="PF05725">
    <property type="entry name" value="FNIP"/>
    <property type="match status" value="3"/>
</dbReference>
<keyword id="KW-1185">Reference proteome</keyword>
<keyword id="KW-0677">Repeat</keyword>
<proteinExistence type="predicted"/>
<organism>
    <name type="scientific">Acanthamoeba polyphaga mimivirus</name>
    <name type="common">APMV</name>
    <dbReference type="NCBI Taxonomy" id="212035"/>
    <lineage>
        <taxon>Viruses</taxon>
        <taxon>Varidnaviria</taxon>
        <taxon>Bamfordvirae</taxon>
        <taxon>Nucleocytoviricota</taxon>
        <taxon>Megaviricetes</taxon>
        <taxon>Imitervirales</taxon>
        <taxon>Mimiviridae</taxon>
        <taxon>Megamimivirinae</taxon>
        <taxon>Mimivirus</taxon>
        <taxon>Mimivirus bradfordmassiliense</taxon>
    </lineage>
</organism>
<reference key="1">
    <citation type="journal article" date="2004" name="Science">
        <title>The 1.2-megabase genome sequence of Mimivirus.</title>
        <authorList>
            <person name="Raoult D."/>
            <person name="Audic S."/>
            <person name="Robert C."/>
            <person name="Abergel C."/>
            <person name="Renesto P."/>
            <person name="Ogata H."/>
            <person name="La Scola B."/>
            <person name="Susan M."/>
            <person name="Claverie J.-M."/>
        </authorList>
    </citation>
    <scope>NUCLEOTIDE SEQUENCE [LARGE SCALE GENOMIC DNA]</scope>
    <source>
        <strain>Rowbotham-Bradford</strain>
    </source>
</reference>
<feature type="chain" id="PRO_0000119988" description="Putative F-box and FNIP repeat-containing protein R286">
    <location>
        <begin position="1"/>
        <end position="298"/>
    </location>
</feature>
<feature type="domain" description="F-box">
    <location>
        <begin position="4"/>
        <end position="48"/>
    </location>
</feature>
<feature type="repeat" description="FNIP 1">
    <location>
        <begin position="124"/>
        <end position="165"/>
    </location>
</feature>
<feature type="repeat" description="FNIP 2">
    <location>
        <begin position="255"/>
        <end position="297"/>
    </location>
</feature>